<name>LUFX_LUTLO</name>
<comment type="function">
    <text evidence="3 4 5">Sand fly salivary protein with antithrombotic, and anti-complement (alternative pathway) activities (PubMed:22796577, PubMed:28912782, PubMed:36947859). Is a slow, tight, non-competitive, and reversible inhibitor of factor Xa (FXa, F10) (PubMed:22796577). Is specific for FXa (Kd=3.86 nM) and does not interact with non-activated FX, or all other enzymes tested (PubMed:22796577). In addition, it blocks prothrombinase and increases both prothrombin time and activated partial thromboplastin time (PubMed:22796577). It also prevents protease-activated receptor 2 (F2RL1, PAR2) activation by FXa (PubMed:22796577). In vivo, it abrogates edema formation triggered by injection of FXa in the paw of mice (PubMed:22796577). Moreover, it prevents FeCl(3)-induced carotid artery thrombus formation and prolongs activated partial thromboplastin time ex vivo, implying that it works as an anticoagulant in vivo (PubMed:22796577). It also inhibits the early steps of the alternative pathway of complement by direct binding to the proconvertase C3b-B complex, by inhibiting activation of factor B and consequently the formation of the C3 convertase (PubMed:28912782).</text>
</comment>
<comment type="subunit">
    <text evidence="3 4 5">Interacts with factor Xa (PubMed:22796577, PubMed:36947859). Associates with complement proconvertase C3b-B complex (PubMed:28912782, PubMed:36947859).</text>
</comment>
<comment type="subcellular location">
    <subcellularLocation>
        <location evidence="3">Secreted</location>
    </subcellularLocation>
</comment>
<comment type="tissue specificity">
    <text evidence="3">Expressed in salivary glands.</text>
</comment>
<reference evidence="8" key="1">
    <citation type="journal article" date="2004" name="J. Exp. Biol.">
        <title>Identification of the most abundant secreted proteins from the salivary glands of the sand fly Lutzomyia longipalpis, vector of Leishmania chagasi.</title>
        <authorList>
            <person name="Valenzuela J.G."/>
            <person name="Garfield M."/>
            <person name="Rowton E.D."/>
            <person name="Pham V.M."/>
        </authorList>
    </citation>
    <scope>NUCLEOTIDE SEQUENCE [MRNA]</scope>
    <source>
        <tissue>Salivary gland</tissue>
    </source>
</reference>
<reference key="2">
    <citation type="journal article" date="2012" name="Arterioscler. Thromb. Vasc. Biol.">
        <title>Lufaxin, a novel factor Xa inhibitor from the salivary gland of the sand fly Lutzomyia longipalpis blocks protease-activated receptor 2 activation and inhibits inflammation and thrombosis in vivo.</title>
        <authorList>
            <person name="Collin N."/>
            <person name="Assumpcao T.C."/>
            <person name="Mizurini D.M."/>
            <person name="Gilmore D.C."/>
            <person name="Dutra-Oliveira A."/>
            <person name="Kotsyfakis M."/>
            <person name="Sa-Nunes A."/>
            <person name="Teixeira C."/>
            <person name="Ribeiro J.M."/>
            <person name="Monteiro R.Q."/>
            <person name="Valenzuela J.G."/>
            <person name="Francischetti I.M."/>
        </authorList>
    </citation>
    <scope>FUNCTION</scope>
    <scope>SUBCELLULAR LOCATION</scope>
    <scope>TISSUE SPECIFICITY</scope>
    <scope>RECOMBINANT PROTEIN</scope>
    <scope>BIOASSAY</scope>
    <scope>PROBABLE GLYCOSYLATION AT ASN-262</scope>
</reference>
<reference key="3">
    <citation type="journal article" date="2017" name="Front. Immunol.">
        <title>The sand fly salivary protein lufaxin inhibits the early steps of the alternative pathway of complement by direct binding to the proconvertase C3b-B.</title>
        <authorList>
            <person name="Mendes-Sousa A.F."/>
            <person name="do Vale V.F."/>
            <person name="Silva N.C.S."/>
            <person name="Guimaraes-Costa A.B."/>
            <person name="Pereira M.H."/>
            <person name="Sant'Anna M.R.V."/>
            <person name="Oliveira F."/>
            <person name="Kamhawi S."/>
            <person name="Ribeiro J.M.C."/>
            <person name="Andersen J.F."/>
            <person name="Valenzuela J.G."/>
            <person name="Araujo R.N."/>
        </authorList>
    </citation>
    <scope>FUNCTION</scope>
    <scope>SUBUNIT</scope>
    <scope>RECOMBINANT EXPRESSION</scope>
</reference>
<reference evidence="9 10 11" key="4">
    <citation type="journal article" date="2023" name="Blood">
        <title>A bispecific inhibitor of complement and coagulation blocks activation in complementopathy models via a novel mechanism.</title>
        <authorList>
            <person name="Andersen J.F."/>
            <person name="Lei H."/>
            <person name="Strayer E.C."/>
            <person name="Kanai T."/>
            <person name="Pham V."/>
            <person name="Pan X.Z."/>
            <person name="Alvarenga P.H."/>
            <person name="Gerber G.F."/>
            <person name="Asojo O.A."/>
            <person name="Francischetti I.M.B."/>
            <person name="Brodsky R.A."/>
            <person name="Valenzuela J.G."/>
            <person name="Ribeiro J.M.C."/>
        </authorList>
    </citation>
    <scope>X-RAY CRYSTALLOGRAPHY (2.31 ANGSTROMS) OF 24-301</scope>
    <scope>STRUCTURE BY ELECTRON MICROSCOPY (3.22 ANGSTROMS) OF 24-301 IN COMPLEX WITH C3B-B PROCONVERTASE AND F10</scope>
    <scope>FUNCTION</scope>
    <scope>INTERACTION WITH F10 AND C3B-B PROCONVERTASE</scope>
    <scope>DISULFIDE BONDS</scope>
</reference>
<organism>
    <name type="scientific">Lutzomyia longipalpis</name>
    <name type="common">Sand fly</name>
    <dbReference type="NCBI Taxonomy" id="7200"/>
    <lineage>
        <taxon>Eukaryota</taxon>
        <taxon>Metazoa</taxon>
        <taxon>Ecdysozoa</taxon>
        <taxon>Arthropoda</taxon>
        <taxon>Hexapoda</taxon>
        <taxon>Insecta</taxon>
        <taxon>Pterygota</taxon>
        <taxon>Neoptera</taxon>
        <taxon>Endopterygota</taxon>
        <taxon>Diptera</taxon>
        <taxon>Nematocera</taxon>
        <taxon>Psychodoidea</taxon>
        <taxon>Psychodidae</taxon>
        <taxon>Lutzomyia</taxon>
        <taxon>Lutzomyia</taxon>
    </lineage>
</organism>
<feature type="signal peptide" evidence="1">
    <location>
        <begin position="1"/>
        <end position="23"/>
    </location>
</feature>
<feature type="chain" id="PRO_5004263472" description="Lufaxin">
    <location>
        <begin position="24"/>
        <end position="301"/>
    </location>
</feature>
<feature type="glycosylation site" description="N-linked (GlcNAc...) asparagine" evidence="2 7">
    <location>
        <position position="262"/>
    </location>
</feature>
<feature type="disulfide bond" evidence="5 10">
    <location>
        <begin position="52"/>
        <end position="60"/>
    </location>
</feature>
<feature type="disulfide bond" evidence="5 10">
    <location>
        <begin position="78"/>
        <end position="137"/>
    </location>
</feature>
<feature type="disulfide bond" evidence="5 10">
    <location>
        <begin position="102"/>
        <end position="112"/>
    </location>
</feature>
<feature type="disulfide bond" evidence="5 10">
    <location>
        <begin position="258"/>
        <end position="265"/>
    </location>
</feature>
<feature type="strand" evidence="13">
    <location>
        <begin position="26"/>
        <end position="31"/>
    </location>
</feature>
<feature type="strand" evidence="13">
    <location>
        <begin position="38"/>
        <end position="46"/>
    </location>
</feature>
<feature type="strand" evidence="13">
    <location>
        <begin position="60"/>
        <end position="62"/>
    </location>
</feature>
<feature type="strand" evidence="13">
    <location>
        <begin position="64"/>
        <end position="72"/>
    </location>
</feature>
<feature type="strand" evidence="13">
    <location>
        <begin position="74"/>
        <end position="88"/>
    </location>
</feature>
<feature type="helix" evidence="13">
    <location>
        <begin position="94"/>
        <end position="96"/>
    </location>
</feature>
<feature type="strand" evidence="13">
    <location>
        <begin position="100"/>
        <end position="105"/>
    </location>
</feature>
<feature type="strand" evidence="13">
    <location>
        <begin position="109"/>
        <end position="117"/>
    </location>
</feature>
<feature type="strand" evidence="13">
    <location>
        <begin position="124"/>
        <end position="134"/>
    </location>
</feature>
<feature type="helix" evidence="13">
    <location>
        <begin position="140"/>
        <end position="144"/>
    </location>
</feature>
<feature type="turn" evidence="13">
    <location>
        <begin position="148"/>
        <end position="150"/>
    </location>
</feature>
<feature type="turn" evidence="13">
    <location>
        <begin position="162"/>
        <end position="164"/>
    </location>
</feature>
<feature type="strand" evidence="13">
    <location>
        <begin position="172"/>
        <end position="177"/>
    </location>
</feature>
<feature type="strand" evidence="13">
    <location>
        <begin position="183"/>
        <end position="187"/>
    </location>
</feature>
<feature type="strand" evidence="13">
    <location>
        <begin position="190"/>
        <end position="196"/>
    </location>
</feature>
<feature type="strand" evidence="12">
    <location>
        <begin position="199"/>
        <end position="201"/>
    </location>
</feature>
<feature type="strand" evidence="13">
    <location>
        <begin position="203"/>
        <end position="211"/>
    </location>
</feature>
<feature type="helix" evidence="13">
    <location>
        <begin position="212"/>
        <end position="214"/>
    </location>
</feature>
<feature type="strand" evidence="13">
    <location>
        <begin position="217"/>
        <end position="224"/>
    </location>
</feature>
<feature type="helix" evidence="13">
    <location>
        <begin position="227"/>
        <end position="229"/>
    </location>
</feature>
<feature type="strand" evidence="13">
    <location>
        <begin position="231"/>
        <end position="240"/>
    </location>
</feature>
<feature type="strand" evidence="13">
    <location>
        <begin position="243"/>
        <end position="246"/>
    </location>
</feature>
<feature type="strand" evidence="13">
    <location>
        <begin position="251"/>
        <end position="256"/>
    </location>
</feature>
<feature type="strand" evidence="13">
    <location>
        <begin position="263"/>
        <end position="270"/>
    </location>
</feature>
<feature type="strand" evidence="13">
    <location>
        <begin position="275"/>
        <end position="284"/>
    </location>
</feature>
<evidence type="ECO:0000255" key="1"/>
<evidence type="ECO:0000255" key="2">
    <source>
        <dbReference type="PROSITE-ProRule" id="PRU00498"/>
    </source>
</evidence>
<evidence type="ECO:0000269" key="3">
    <source>
    </source>
</evidence>
<evidence type="ECO:0000269" key="4">
    <source>
    </source>
</evidence>
<evidence type="ECO:0000269" key="5">
    <source>
    </source>
</evidence>
<evidence type="ECO:0000303" key="6">
    <source>
    </source>
</evidence>
<evidence type="ECO:0000305" key="7">
    <source>
    </source>
</evidence>
<evidence type="ECO:0000312" key="8">
    <source>
        <dbReference type="EMBL" id="AAS05319.1"/>
    </source>
</evidence>
<evidence type="ECO:0007744" key="9">
    <source>
        <dbReference type="PDB" id="8ENU"/>
    </source>
</evidence>
<evidence type="ECO:0007744" key="10">
    <source>
        <dbReference type="PDB" id="8EO2"/>
    </source>
</evidence>
<evidence type="ECO:0007744" key="11">
    <source>
        <dbReference type="PDB" id="8EOK"/>
    </source>
</evidence>
<evidence type="ECO:0007829" key="12">
    <source>
        <dbReference type="PDB" id="8ENU"/>
    </source>
</evidence>
<evidence type="ECO:0007829" key="13">
    <source>
        <dbReference type="PDB" id="8EO2"/>
    </source>
</evidence>
<keyword id="KW-0002">3D-structure</keyword>
<keyword id="KW-1203">Blood coagulation cascade inhibiting toxin</keyword>
<keyword id="KW-1216">Complement system impairing toxin</keyword>
<keyword id="KW-1015">Disulfide bond</keyword>
<keyword id="KW-0325">Glycoprotein</keyword>
<keyword id="KW-1199">Hemostasis impairing toxin</keyword>
<keyword id="KW-0964">Secreted</keyword>
<keyword id="KW-0732">Signal</keyword>
<keyword id="KW-0800">Toxin</keyword>
<accession>Q5WPU8</accession>
<sequence length="301" mass="34951">MNSINFLSIVGLISFGFIVAVKCDGDEYFIGKYKEKDETLFFASYGLKRDPCQIVLGYKCSNNQTHFVLNFKTNKKSCISAIKLTSYPKINQNSDLTKNLYCQTGGIGTDNCKLVFKKRKRQIAANIEIYGIPAKKCSFKDRYIGADPLHVDSYGLPYQFDQEHGWNVERYNIFKDTRFSTEVFYHKNGLFNTQITYLAEEDSFSEAREITAKDIKKKFSIILPNEEYKRISFLDVYWFQETMRKKPKYPYIHYNGECSNENKTCELVFDTDELMTYALVKVFTNPESDGSRLKEEDLGRG</sequence>
<dbReference type="EMBL" id="AY445936">
    <property type="protein sequence ID" value="AAS05319.1"/>
    <property type="molecule type" value="mRNA"/>
</dbReference>
<dbReference type="PDB" id="8ENU">
    <property type="method" value="EM"/>
    <property type="resolution" value="3.22 A"/>
    <property type="chains" value="A=24-301"/>
</dbReference>
<dbReference type="PDB" id="8EO2">
    <property type="method" value="X-ray"/>
    <property type="resolution" value="2.31 A"/>
    <property type="chains" value="A/B=24-301"/>
</dbReference>
<dbReference type="PDB" id="8EOK">
    <property type="method" value="EM"/>
    <property type="resolution" value="3.53 A"/>
    <property type="chains" value="A=24-301"/>
</dbReference>
<dbReference type="PDBsum" id="8ENU"/>
<dbReference type="PDBsum" id="8EO2"/>
<dbReference type="PDBsum" id="8EOK"/>
<dbReference type="EMDB" id="EMD-28279"/>
<dbReference type="EMDB" id="EMD-28378"/>
<dbReference type="SMR" id="Q5WPU8"/>
<dbReference type="iPTMnet" id="Q5WPU8"/>
<dbReference type="VEuPathDB" id="VectorBase:LLOJ001514"/>
<dbReference type="VEuPathDB" id="VectorBase:LLONM1_005432"/>
<dbReference type="Proteomes" id="UP000092461">
    <property type="component" value="Unplaced"/>
</dbReference>
<dbReference type="GO" id="GO:0005576">
    <property type="term" value="C:extracellular region"/>
    <property type="evidence" value="ECO:0007669"/>
    <property type="project" value="UniProtKB-SubCell"/>
</dbReference>
<dbReference type="GO" id="GO:0090729">
    <property type="term" value="F:toxin activity"/>
    <property type="evidence" value="ECO:0007669"/>
    <property type="project" value="UniProtKB-KW"/>
</dbReference>
<protein>
    <recommendedName>
        <fullName evidence="6">Lufaxin</fullName>
    </recommendedName>
    <alternativeName>
        <fullName evidence="8">32.4 kDa salivary protein</fullName>
    </alternativeName>
    <alternativeName>
        <fullName evidence="6">Lutzomyia longipalpis FXa inhibitor</fullName>
    </alternativeName>
</protein>
<proteinExistence type="evidence at protein level"/>